<comment type="function">
    <text evidence="1">One of several proteins that assist in the late maturation steps of the functional core of the 30S ribosomal subunit. Associates with free 30S ribosomal subunits (but not with 30S subunits that are part of 70S ribosomes or polysomes). Required for efficient processing of 16S rRNA. May interact with the 5'-terminal helix region of 16S rRNA.</text>
</comment>
<comment type="subunit">
    <text evidence="1">Monomer. Binds 30S ribosomal subunits, but not 50S ribosomal subunits or 70S ribosomes.</text>
</comment>
<comment type="subcellular location">
    <subcellularLocation>
        <location evidence="1">Cytoplasm</location>
    </subcellularLocation>
</comment>
<comment type="similarity">
    <text evidence="1">Belongs to the RbfA family.</text>
</comment>
<organism>
    <name type="scientific">Natranaerobius thermophilus (strain ATCC BAA-1301 / DSM 18059 / JW/NM-WN-LF)</name>
    <dbReference type="NCBI Taxonomy" id="457570"/>
    <lineage>
        <taxon>Bacteria</taxon>
        <taxon>Bacillati</taxon>
        <taxon>Bacillota</taxon>
        <taxon>Clostridia</taxon>
        <taxon>Natranaerobiales</taxon>
        <taxon>Natranaerobiaceae</taxon>
        <taxon>Natranaerobius</taxon>
    </lineage>
</organism>
<feature type="chain" id="PRO_1000088908" description="Ribosome-binding factor A">
    <location>
        <begin position="1"/>
        <end position="131"/>
    </location>
</feature>
<feature type="region of interest" description="Disordered" evidence="2">
    <location>
        <begin position="110"/>
        <end position="131"/>
    </location>
</feature>
<feature type="compositionally biased region" description="Acidic residues" evidence="2">
    <location>
        <begin position="115"/>
        <end position="131"/>
    </location>
</feature>
<dbReference type="EMBL" id="CP001034">
    <property type="protein sequence ID" value="ACB85028.1"/>
    <property type="molecule type" value="Genomic_DNA"/>
</dbReference>
<dbReference type="RefSeq" id="WP_012447902.1">
    <property type="nucleotide sequence ID" value="NC_010718.1"/>
</dbReference>
<dbReference type="SMR" id="B2A398"/>
<dbReference type="FunCoup" id="B2A398">
    <property type="interactions" value="396"/>
</dbReference>
<dbReference type="STRING" id="457570.Nther_1445"/>
<dbReference type="KEGG" id="nth:Nther_1445"/>
<dbReference type="eggNOG" id="COG0858">
    <property type="taxonomic scope" value="Bacteria"/>
</dbReference>
<dbReference type="HOGENOM" id="CLU_089475_6_3_9"/>
<dbReference type="InParanoid" id="B2A398"/>
<dbReference type="OrthoDB" id="307788at2"/>
<dbReference type="Proteomes" id="UP000001683">
    <property type="component" value="Chromosome"/>
</dbReference>
<dbReference type="GO" id="GO:0005829">
    <property type="term" value="C:cytosol"/>
    <property type="evidence" value="ECO:0007669"/>
    <property type="project" value="TreeGrafter"/>
</dbReference>
<dbReference type="GO" id="GO:0043024">
    <property type="term" value="F:ribosomal small subunit binding"/>
    <property type="evidence" value="ECO:0007669"/>
    <property type="project" value="TreeGrafter"/>
</dbReference>
<dbReference type="GO" id="GO:0030490">
    <property type="term" value="P:maturation of SSU-rRNA"/>
    <property type="evidence" value="ECO:0007669"/>
    <property type="project" value="UniProtKB-UniRule"/>
</dbReference>
<dbReference type="Gene3D" id="3.30.300.20">
    <property type="match status" value="1"/>
</dbReference>
<dbReference type="HAMAP" id="MF_00003">
    <property type="entry name" value="RbfA"/>
    <property type="match status" value="1"/>
</dbReference>
<dbReference type="InterPro" id="IPR015946">
    <property type="entry name" value="KH_dom-like_a/b"/>
</dbReference>
<dbReference type="InterPro" id="IPR000238">
    <property type="entry name" value="RbfA"/>
</dbReference>
<dbReference type="InterPro" id="IPR023799">
    <property type="entry name" value="RbfA_dom_sf"/>
</dbReference>
<dbReference type="InterPro" id="IPR020053">
    <property type="entry name" value="Ribosome-bd_factorA_CS"/>
</dbReference>
<dbReference type="NCBIfam" id="TIGR00082">
    <property type="entry name" value="rbfA"/>
    <property type="match status" value="1"/>
</dbReference>
<dbReference type="PANTHER" id="PTHR33515">
    <property type="entry name" value="RIBOSOME-BINDING FACTOR A, CHLOROPLASTIC-RELATED"/>
    <property type="match status" value="1"/>
</dbReference>
<dbReference type="PANTHER" id="PTHR33515:SF1">
    <property type="entry name" value="RIBOSOME-BINDING FACTOR A, CHLOROPLASTIC-RELATED"/>
    <property type="match status" value="1"/>
</dbReference>
<dbReference type="Pfam" id="PF02033">
    <property type="entry name" value="RBFA"/>
    <property type="match status" value="1"/>
</dbReference>
<dbReference type="SUPFAM" id="SSF89919">
    <property type="entry name" value="Ribosome-binding factor A, RbfA"/>
    <property type="match status" value="1"/>
</dbReference>
<dbReference type="PROSITE" id="PS01319">
    <property type="entry name" value="RBFA"/>
    <property type="match status" value="1"/>
</dbReference>
<accession>B2A398</accession>
<protein>
    <recommendedName>
        <fullName evidence="1">Ribosome-binding factor A</fullName>
    </recommendedName>
</protein>
<keyword id="KW-0963">Cytoplasm</keyword>
<keyword id="KW-1185">Reference proteome</keyword>
<keyword id="KW-0690">Ribosome biogenesis</keyword>
<reference key="1">
    <citation type="submission" date="2008-04" db="EMBL/GenBank/DDBJ databases">
        <title>Complete sequence of chromosome of Natranaerobius thermophilus JW/NM-WN-LF.</title>
        <authorList>
            <consortium name="US DOE Joint Genome Institute"/>
            <person name="Copeland A."/>
            <person name="Lucas S."/>
            <person name="Lapidus A."/>
            <person name="Glavina del Rio T."/>
            <person name="Dalin E."/>
            <person name="Tice H."/>
            <person name="Bruce D."/>
            <person name="Goodwin L."/>
            <person name="Pitluck S."/>
            <person name="Chertkov O."/>
            <person name="Brettin T."/>
            <person name="Detter J.C."/>
            <person name="Han C."/>
            <person name="Kuske C.R."/>
            <person name="Schmutz J."/>
            <person name="Larimer F."/>
            <person name="Land M."/>
            <person name="Hauser L."/>
            <person name="Kyrpides N."/>
            <person name="Lykidis A."/>
            <person name="Mesbah N.M."/>
            <person name="Wiegel J."/>
        </authorList>
    </citation>
    <scope>NUCLEOTIDE SEQUENCE [LARGE SCALE GENOMIC DNA]</scope>
    <source>
        <strain>ATCC BAA-1301 / DSM 18059 / JW/NM-WN-LF</strain>
    </source>
</reference>
<proteinExistence type="inferred from homology"/>
<name>RBFA_NATTJ</name>
<gene>
    <name evidence="1" type="primary">rbfA</name>
    <name type="ordered locus">Nther_1445</name>
</gene>
<sequence length="131" mass="14971">MSGMRKEKLQEELKKIISDILQREVKDPSVGFVTVTSVDLSGDLRHAKVFVSILGEKENQQDSLRGLEKATGFIRSELGKRVRLRHVPEIVFKFDESIEHGDHINKLLKQMNLGEDNEDNEDKENNDPGEE</sequence>
<evidence type="ECO:0000255" key="1">
    <source>
        <dbReference type="HAMAP-Rule" id="MF_00003"/>
    </source>
</evidence>
<evidence type="ECO:0000256" key="2">
    <source>
        <dbReference type="SAM" id="MobiDB-lite"/>
    </source>
</evidence>